<keyword id="KW-0903">Direct protein sequencing</keyword>
<keyword id="KW-1015">Disulfide bond</keyword>
<keyword id="KW-0166">Nematocyst</keyword>
<keyword id="KW-0646">Protease inhibitor</keyword>
<keyword id="KW-0964">Secreted</keyword>
<keyword id="KW-0722">Serine protease inhibitor</keyword>
<proteinExistence type="evidence at protein level"/>
<accession>P81547</accession>
<protein>
    <recommendedName>
        <fullName evidence="6">PI-actitoxin-Axm2a</fullName>
        <shortName evidence="6">PI-AITX-Axm2a</shortName>
    </recommendedName>
    <alternativeName>
        <fullName evidence="7">Kunitz-type protease inhibitor AXPI-I</fullName>
        <shortName evidence="5">AXAPI</shortName>
    </alternativeName>
</protein>
<name>VKT1_ANTAF</name>
<evidence type="ECO:0000250" key="1"/>
<evidence type="ECO:0000255" key="2">
    <source>
        <dbReference type="PROSITE-ProRule" id="PRU00031"/>
    </source>
</evidence>
<evidence type="ECO:0000269" key="3">
    <source>
    </source>
</evidence>
<evidence type="ECO:0000269" key="4">
    <source>
    </source>
</evidence>
<evidence type="ECO:0000303" key="5">
    <source>
    </source>
</evidence>
<evidence type="ECO:0000303" key="6">
    <source>
    </source>
</evidence>
<evidence type="ECO:0000303" key="7">
    <source>
    </source>
</evidence>
<evidence type="ECO:0000305" key="8"/>
<evidence type="ECO:0000305" key="9">
    <source>
    </source>
</evidence>
<evidence type="ECO:0000305" key="10">
    <source>
    </source>
</evidence>
<dbReference type="SMR" id="P81547"/>
<dbReference type="MEROPS" id="I02.026"/>
<dbReference type="GO" id="GO:0005615">
    <property type="term" value="C:extracellular space"/>
    <property type="evidence" value="ECO:0007669"/>
    <property type="project" value="TreeGrafter"/>
</dbReference>
<dbReference type="GO" id="GO:0042151">
    <property type="term" value="C:nematocyst"/>
    <property type="evidence" value="ECO:0007669"/>
    <property type="project" value="UniProtKB-SubCell"/>
</dbReference>
<dbReference type="GO" id="GO:0004867">
    <property type="term" value="F:serine-type endopeptidase inhibitor activity"/>
    <property type="evidence" value="ECO:0007669"/>
    <property type="project" value="UniProtKB-KW"/>
</dbReference>
<dbReference type="FunFam" id="4.10.410.10:FF:000021">
    <property type="entry name" value="Serine protease inhibitor, putative"/>
    <property type="match status" value="1"/>
</dbReference>
<dbReference type="Gene3D" id="4.10.410.10">
    <property type="entry name" value="Pancreatic trypsin inhibitor Kunitz domain"/>
    <property type="match status" value="1"/>
</dbReference>
<dbReference type="InterPro" id="IPR002223">
    <property type="entry name" value="Kunitz_BPTI"/>
</dbReference>
<dbReference type="InterPro" id="IPR036880">
    <property type="entry name" value="Kunitz_BPTI_sf"/>
</dbReference>
<dbReference type="InterPro" id="IPR020901">
    <property type="entry name" value="Prtase_inh_Kunz-CS"/>
</dbReference>
<dbReference type="InterPro" id="IPR050098">
    <property type="entry name" value="TFPI/VKTCI-like"/>
</dbReference>
<dbReference type="PANTHER" id="PTHR10083:SF374">
    <property type="entry name" value="BPTI_KUNITZ INHIBITOR DOMAIN-CONTAINING PROTEIN"/>
    <property type="match status" value="1"/>
</dbReference>
<dbReference type="PANTHER" id="PTHR10083">
    <property type="entry name" value="KUNITZ-TYPE PROTEASE INHIBITOR-RELATED"/>
    <property type="match status" value="1"/>
</dbReference>
<dbReference type="Pfam" id="PF00014">
    <property type="entry name" value="Kunitz_BPTI"/>
    <property type="match status" value="1"/>
</dbReference>
<dbReference type="PRINTS" id="PR00759">
    <property type="entry name" value="BASICPTASE"/>
</dbReference>
<dbReference type="SMART" id="SM00131">
    <property type="entry name" value="KU"/>
    <property type="match status" value="1"/>
</dbReference>
<dbReference type="SUPFAM" id="SSF57362">
    <property type="entry name" value="BPTI-like"/>
    <property type="match status" value="1"/>
</dbReference>
<dbReference type="PROSITE" id="PS00280">
    <property type="entry name" value="BPTI_KUNITZ_1"/>
    <property type="match status" value="1"/>
</dbReference>
<dbReference type="PROSITE" id="PS50279">
    <property type="entry name" value="BPTI_KUNITZ_2"/>
    <property type="match status" value="1"/>
</dbReference>
<reference key="1">
    <citation type="journal article" date="1997" name="Comp. Biochem. Physiol.">
        <title>Isolation and amino acid sequences of two Kunitz-type protease inhibitors from the sea anemone Anthopleura aff. xanthogrammica.</title>
        <authorList>
            <person name="Minagawa S."/>
            <person name="Ishida M."/>
            <person name="Shimakura K."/>
            <person name="Nagashima Y."/>
            <person name="Shiomi K."/>
        </authorList>
    </citation>
    <scope>PROTEIN SEQUENCE</scope>
    <scope>FUNCTION</scope>
    <scope>TISSUE SPECIFICITY</scope>
    <source>
        <tissue>Tentacle</tissue>
    </source>
</reference>
<reference key="2">
    <citation type="journal article" date="2008" name="Comp. Biochem. Physiol.">
        <title>Kunitz-type protease inhibitors from acrorhagi of three species of sea anemones.</title>
        <authorList>
            <person name="Minagawa S."/>
            <person name="Sugiyama M."/>
            <person name="Ishida M."/>
            <person name="Nagashima Y."/>
            <person name="Shiomi K."/>
        </authorList>
    </citation>
    <scope>PROTEIN SEQUENCE</scope>
    <scope>FUNCTION</scope>
</reference>
<reference key="3">
    <citation type="journal article" date="2012" name="Toxicon">
        <title>Development of a rational nomenclature for naming peptide and protein toxins from sea anemones.</title>
        <authorList>
            <person name="Oliveira J.S."/>
            <person name="Fuentes-Silva D."/>
            <person name="King G.F."/>
        </authorList>
    </citation>
    <scope>NOMENCLATURE</scope>
</reference>
<feature type="chain" id="PRO_0000155416" description="PI-actitoxin-Axm2a" evidence="3 4">
    <location>
        <begin position="1"/>
        <end position="58"/>
    </location>
</feature>
<feature type="domain" description="BPTI/Kunitz inhibitor" evidence="2">
    <location>
        <begin position="7"/>
        <end position="57"/>
    </location>
</feature>
<feature type="site" description="Reactive bond for trypsin" evidence="1">
    <location>
        <begin position="17"/>
        <end position="18"/>
    </location>
</feature>
<feature type="disulfide bond" evidence="2">
    <location>
        <begin position="7"/>
        <end position="57"/>
    </location>
</feature>
<feature type="disulfide bond" evidence="2">
    <location>
        <begin position="16"/>
        <end position="40"/>
    </location>
</feature>
<feature type="disulfide bond" evidence="2">
    <location>
        <begin position="32"/>
        <end position="53"/>
    </location>
</feature>
<organism>
    <name type="scientific">Anthopleura aff. xanthogrammica</name>
    <name type="common">Sea anemone</name>
    <dbReference type="NCBI Taxonomy" id="152178"/>
    <lineage>
        <taxon>Eukaryota</taxon>
        <taxon>Metazoa</taxon>
        <taxon>Cnidaria</taxon>
        <taxon>Anthozoa</taxon>
        <taxon>Hexacorallia</taxon>
        <taxon>Actiniaria</taxon>
        <taxon>Actiniidae</taxon>
        <taxon>Anthopleura</taxon>
    </lineage>
</organism>
<sequence length="58" mass="6341">APVNEDCLLPKKVGPCRAAVPRFYYNSDSGKCEGFTYGGCHANANNFKTKDECKNACH</sequence>
<comment type="function">
    <text evidence="3 4">Serine protease inhibitor that is strongly active against trypsin (1900 IU/mg) and moderately active against plasmin. Also shows weak inhibition against chymotrypsin (70%), elastase (38%) and the metalloprotease thermolysin (14%).</text>
</comment>
<comment type="subcellular location">
    <subcellularLocation>
        <location evidence="8">Secreted</location>
    </subcellularLocation>
    <subcellularLocation>
        <location evidence="8">Nematocyst</location>
    </subcellularLocation>
</comment>
<comment type="tissue specificity">
    <text evidence="3">Expressed by acrorhagi.</text>
</comment>
<comment type="miscellaneous">
    <text evidence="9 10">Does not inhibit potassium channels (Kv), as well as cysteine proteases (papain and bromelain) (PubMed:18450492). Is not active against kallikrein (PubMed:9440231).</text>
</comment>
<comment type="similarity">
    <text evidence="8">Belongs to the venom Kunitz-type family. Sea anemone type 2 potassium channel toxin subfamily.</text>
</comment>